<dbReference type="EMBL" id="AF144301">
    <property type="status" value="NOT_ANNOTATED_CDS"/>
    <property type="molecule type" value="Genomic_RNA"/>
</dbReference>
<dbReference type="SMR" id="P0C791"/>
<dbReference type="KEGG" id="vg:3896424"/>
<dbReference type="OrthoDB" id="22875at10239"/>
<dbReference type="Proteomes" id="UP000131152">
    <property type="component" value="Genome"/>
</dbReference>
<dbReference type="GO" id="GO:0044164">
    <property type="term" value="C:host cell cytosol"/>
    <property type="evidence" value="ECO:0007669"/>
    <property type="project" value="UniProtKB-SubCell"/>
</dbReference>
<dbReference type="GO" id="GO:0044192">
    <property type="term" value="C:host cell mitochondrial inner membrane"/>
    <property type="evidence" value="ECO:0007669"/>
    <property type="project" value="UniProtKB-SubCell"/>
</dbReference>
<dbReference type="GO" id="GO:0042025">
    <property type="term" value="C:host cell nucleus"/>
    <property type="evidence" value="ECO:0007669"/>
    <property type="project" value="UniProtKB-SubCell"/>
</dbReference>
<dbReference type="GO" id="GO:0016020">
    <property type="term" value="C:membrane"/>
    <property type="evidence" value="ECO:0007669"/>
    <property type="project" value="UniProtKB-UniRule"/>
</dbReference>
<dbReference type="GO" id="GO:0052150">
    <property type="term" value="P:symbiont-mediated perturbation of host apoptosis"/>
    <property type="evidence" value="ECO:0007669"/>
    <property type="project" value="UniProtKB-KW"/>
</dbReference>
<dbReference type="GO" id="GO:0039545">
    <property type="term" value="P:symbiont-mediated suppression of host cytoplasmic pattern recognition receptor signaling pathway via inhibition of MAVS activity"/>
    <property type="evidence" value="ECO:0007669"/>
    <property type="project" value="UniProtKB-KW"/>
</dbReference>
<dbReference type="HAMAP" id="MF_04064">
    <property type="entry name" value="INFV_PB1F2"/>
    <property type="match status" value="1"/>
</dbReference>
<dbReference type="InterPro" id="IPR021045">
    <property type="entry name" value="Flu_proapoptotic_PB1-F2"/>
</dbReference>
<dbReference type="Pfam" id="PF11986">
    <property type="entry name" value="PB1-F2"/>
    <property type="match status" value="1"/>
</dbReference>
<gene>
    <name evidence="1" type="primary">PB1</name>
</gene>
<proteinExistence type="inferred from homology"/>
<keyword id="KW-0053">Apoptosis</keyword>
<keyword id="KW-1035">Host cytoplasm</keyword>
<keyword id="KW-1043">Host membrane</keyword>
<keyword id="KW-1045">Host mitochondrion</keyword>
<keyword id="KW-1046">Host mitochondrion inner membrane</keyword>
<keyword id="KW-1048">Host nucleus</keyword>
<keyword id="KW-0945">Host-virus interaction</keyword>
<keyword id="KW-1090">Inhibition of host innate immune response by virus</keyword>
<keyword id="KW-1097">Inhibition of host MAVS by virus</keyword>
<keyword id="KW-1113">Inhibition of host RLR pathway by virus</keyword>
<keyword id="KW-0472">Membrane</keyword>
<keyword id="KW-1119">Modulation of host cell apoptosis by virus</keyword>
<keyword id="KW-1185">Reference proteome</keyword>
<keyword id="KW-0899">Viral immunoevasion</keyword>
<organism>
    <name type="scientific">Influenza A virus (strain A/Goose/Guangdong/1/1996 H5N1 genotype Gs/Gd)</name>
    <dbReference type="NCBI Taxonomy" id="93838"/>
    <lineage>
        <taxon>Viruses</taxon>
        <taxon>Riboviria</taxon>
        <taxon>Orthornavirae</taxon>
        <taxon>Negarnaviricota</taxon>
        <taxon>Polyploviricotina</taxon>
        <taxon>Insthoviricetes</taxon>
        <taxon>Articulavirales</taxon>
        <taxon>Orthomyxoviridae</taxon>
        <taxon>Alphainfluenzavirus</taxon>
        <taxon>Alphainfluenzavirus influenzae</taxon>
        <taxon>Influenza A virus</taxon>
    </lineage>
</organism>
<comment type="function">
    <text evidence="1">Plays an important role in promoting lung pathology in both primary viral infection and secondary bacterial infection. Promotes alteration of mitochondrial morphology, dissipation of mitochondrial membrane potential, and cell death. Alternatively, inhibits the production of interferon in the infected cell at the level of host mitochondrial antiviral signaling MAVS. Its level of expression differs greatly depending on which cell type is infected, in a manner that is independent of the levels of expression of other viral proteins. Monocytic cells are more affected than epithelial cells. Seems to disable virus-infected monocytes or other host innate immune cells. During early stage of infection, predisposes the mitochondria to permeability transition through interaction with host SLC25A6/ANT3 and VDAC1. These proteins participate in the formation of the permeability transition pore complex (PTPC) responsible of the release of mitochondrial products that triggers apoptosis.</text>
</comment>
<comment type="subunit">
    <text evidence="1">Oligomer. Interacts with human SLC25A6/ANT3 and VDAC1. Interacts with host MAVS.</text>
</comment>
<comment type="subcellular location">
    <subcellularLocation>
        <location evidence="1">Host mitochondrion inner membrane</location>
    </subcellularLocation>
    <subcellularLocation>
        <location evidence="1">Host nucleus</location>
    </subcellularLocation>
    <subcellularLocation>
        <location evidence="1">Host cytoplasm</location>
        <location evidence="1">Host cytosol</location>
    </subcellularLocation>
    <text evidence="1">Inner mitochondrial membrane in most cells types. Otherwise is detected in the nucleus and cytosol.</text>
</comment>
<comment type="miscellaneous">
    <text>Is not encoded in all strains, and seems to be dispensable for replication.</text>
</comment>
<comment type="similarity">
    <text evidence="1">Belongs to the influenza viruses PB1-F2 family.</text>
</comment>
<reference key="1">
    <citation type="journal article" date="1999" name="Virology">
        <title>Genetic characterization of the pathogenic influenza A/Goose/Guangdong/1/96 (H5N1) virus: similarity of its hemagglutinin gene to those of H5N1 viruses from the 1997 outbreaks in Hong Kong.</title>
        <authorList>
            <person name="Xu X."/>
            <person name="Subbarao K."/>
            <person name="Cox N.J."/>
            <person name="Guo Y."/>
        </authorList>
    </citation>
    <scope>NUCLEOTIDE SEQUENCE [GENOMIC RNA]</scope>
</reference>
<name>PB1F2_I96A0</name>
<sequence>MEQEQDTPWTQSTEHINIQKRGNGQRTQRLEHPNSIRLMDHYLRIMSRVGMHKQIVYWKQWLSLKNPTQGSLKTRVLKRWKLFSKQEWIS</sequence>
<accession>P0C791</accession>
<protein>
    <recommendedName>
        <fullName evidence="1">Protein PB1-F2</fullName>
    </recommendedName>
</protein>
<organismHost>
    <name type="scientific">Aves</name>
    <dbReference type="NCBI Taxonomy" id="8782"/>
</organismHost>
<organismHost>
    <name type="scientific">Felis catus</name>
    <name type="common">Cat</name>
    <name type="synonym">Felis silvestris catus</name>
    <dbReference type="NCBI Taxonomy" id="9685"/>
</organismHost>
<organismHost>
    <name type="scientific">Homo sapiens</name>
    <name type="common">Human</name>
    <dbReference type="NCBI Taxonomy" id="9606"/>
</organismHost>
<organismHost>
    <name type="scientific">Panthera pardus</name>
    <name type="common">Leopard</name>
    <name type="synonym">Felis pardus</name>
    <dbReference type="NCBI Taxonomy" id="9691"/>
</organismHost>
<organismHost>
    <name type="scientific">Panthera tigris</name>
    <name type="common">Tiger</name>
    <dbReference type="NCBI Taxonomy" id="9694"/>
</organismHost>
<organismHost>
    <name type="scientific">Sus scrofa</name>
    <name type="common">Pig</name>
    <dbReference type="NCBI Taxonomy" id="9823"/>
</organismHost>
<feature type="chain" id="PRO_0000402432" description="Protein PB1-F2">
    <location>
        <begin position="1"/>
        <end position="90"/>
    </location>
</feature>
<feature type="region of interest" description="Disordered" evidence="2">
    <location>
        <begin position="1"/>
        <end position="31"/>
    </location>
</feature>
<feature type="region of interest" description="Mitochondrial targeting sequence" evidence="1">
    <location>
        <begin position="65"/>
        <end position="87"/>
    </location>
</feature>
<feature type="compositionally biased region" description="Polar residues" evidence="2">
    <location>
        <begin position="1"/>
        <end position="27"/>
    </location>
</feature>
<feature type="site" description="Low pathogenicity" evidence="1">
    <location>
        <position position="66"/>
    </location>
</feature>
<evidence type="ECO:0000255" key="1">
    <source>
        <dbReference type="HAMAP-Rule" id="MF_04064"/>
    </source>
</evidence>
<evidence type="ECO:0000256" key="2">
    <source>
        <dbReference type="SAM" id="MobiDB-lite"/>
    </source>
</evidence>